<reference key="1">
    <citation type="journal article" date="2007" name="J. Bacteriol.">
        <title>Complete genome of acute rheumatic fever-associated serotype M5 Streptococcus pyogenes strain Manfredo.</title>
        <authorList>
            <person name="Holden M.T.G."/>
            <person name="Scott A."/>
            <person name="Cherevach I."/>
            <person name="Chillingworth T."/>
            <person name="Churcher C."/>
            <person name="Cronin A."/>
            <person name="Dowd L."/>
            <person name="Feltwell T."/>
            <person name="Hamlin N."/>
            <person name="Holroyd S."/>
            <person name="Jagels K."/>
            <person name="Moule S."/>
            <person name="Mungall K."/>
            <person name="Quail M.A."/>
            <person name="Price C."/>
            <person name="Rabbinowitsch E."/>
            <person name="Sharp S."/>
            <person name="Skelton J."/>
            <person name="Whitehead S."/>
            <person name="Barrell B.G."/>
            <person name="Kehoe M."/>
            <person name="Parkhill J."/>
        </authorList>
    </citation>
    <scope>NUCLEOTIDE SEQUENCE [LARGE SCALE GENOMIC DNA]</scope>
    <source>
        <strain>Manfredo</strain>
    </source>
</reference>
<name>TRUB_STRPG</name>
<gene>
    <name evidence="1" type="primary">truB</name>
    <name type="ordered locus">SpyM50837</name>
</gene>
<feature type="chain" id="PRO_1000084701" description="tRNA pseudouridine synthase B">
    <location>
        <begin position="1"/>
        <end position="294"/>
    </location>
</feature>
<feature type="active site" description="Nucleophile" evidence="1">
    <location>
        <position position="39"/>
    </location>
</feature>
<dbReference type="EC" id="5.4.99.25" evidence="1"/>
<dbReference type="EMBL" id="AM295007">
    <property type="protein sequence ID" value="CAM30165.1"/>
    <property type="molecule type" value="Genomic_DNA"/>
</dbReference>
<dbReference type="RefSeq" id="WP_011888841.1">
    <property type="nucleotide sequence ID" value="NC_009332.1"/>
</dbReference>
<dbReference type="SMR" id="A2RE90"/>
<dbReference type="KEGG" id="spf:SpyM50837"/>
<dbReference type="HOGENOM" id="CLU_032087_0_1_9"/>
<dbReference type="GO" id="GO:0003723">
    <property type="term" value="F:RNA binding"/>
    <property type="evidence" value="ECO:0007669"/>
    <property type="project" value="InterPro"/>
</dbReference>
<dbReference type="GO" id="GO:0160148">
    <property type="term" value="F:tRNA pseudouridine(55) synthase activity"/>
    <property type="evidence" value="ECO:0007669"/>
    <property type="project" value="UniProtKB-EC"/>
</dbReference>
<dbReference type="GO" id="GO:1990481">
    <property type="term" value="P:mRNA pseudouridine synthesis"/>
    <property type="evidence" value="ECO:0007669"/>
    <property type="project" value="TreeGrafter"/>
</dbReference>
<dbReference type="GO" id="GO:0031119">
    <property type="term" value="P:tRNA pseudouridine synthesis"/>
    <property type="evidence" value="ECO:0007669"/>
    <property type="project" value="UniProtKB-UniRule"/>
</dbReference>
<dbReference type="CDD" id="cd02573">
    <property type="entry name" value="PseudoU_synth_EcTruB"/>
    <property type="match status" value="1"/>
</dbReference>
<dbReference type="FunFam" id="3.30.2350.10:FF:000011">
    <property type="entry name" value="tRNA pseudouridine synthase B"/>
    <property type="match status" value="1"/>
</dbReference>
<dbReference type="Gene3D" id="3.30.2350.10">
    <property type="entry name" value="Pseudouridine synthase"/>
    <property type="match status" value="1"/>
</dbReference>
<dbReference type="HAMAP" id="MF_01080">
    <property type="entry name" value="TruB_bact"/>
    <property type="match status" value="1"/>
</dbReference>
<dbReference type="InterPro" id="IPR020103">
    <property type="entry name" value="PsdUridine_synth_cat_dom_sf"/>
</dbReference>
<dbReference type="InterPro" id="IPR002501">
    <property type="entry name" value="PsdUridine_synth_N"/>
</dbReference>
<dbReference type="InterPro" id="IPR014780">
    <property type="entry name" value="tRNA_psdUridine_synth_TruB"/>
</dbReference>
<dbReference type="InterPro" id="IPR032819">
    <property type="entry name" value="TruB_C"/>
</dbReference>
<dbReference type="NCBIfam" id="TIGR00431">
    <property type="entry name" value="TruB"/>
    <property type="match status" value="1"/>
</dbReference>
<dbReference type="PANTHER" id="PTHR13767:SF2">
    <property type="entry name" value="PSEUDOURIDYLATE SYNTHASE TRUB1"/>
    <property type="match status" value="1"/>
</dbReference>
<dbReference type="PANTHER" id="PTHR13767">
    <property type="entry name" value="TRNA-PSEUDOURIDINE SYNTHASE"/>
    <property type="match status" value="1"/>
</dbReference>
<dbReference type="Pfam" id="PF16198">
    <property type="entry name" value="TruB_C_2"/>
    <property type="match status" value="1"/>
</dbReference>
<dbReference type="Pfam" id="PF01509">
    <property type="entry name" value="TruB_N"/>
    <property type="match status" value="1"/>
</dbReference>
<dbReference type="SUPFAM" id="SSF55120">
    <property type="entry name" value="Pseudouridine synthase"/>
    <property type="match status" value="1"/>
</dbReference>
<proteinExistence type="inferred from homology"/>
<organism>
    <name type="scientific">Streptococcus pyogenes serotype M5 (strain Manfredo)</name>
    <dbReference type="NCBI Taxonomy" id="160491"/>
    <lineage>
        <taxon>Bacteria</taxon>
        <taxon>Bacillati</taxon>
        <taxon>Bacillota</taxon>
        <taxon>Bacilli</taxon>
        <taxon>Lactobacillales</taxon>
        <taxon>Streptococcaceae</taxon>
        <taxon>Streptococcus</taxon>
    </lineage>
</organism>
<sequence length="294" mass="32377">MINGIINLKKEAGMTSHDAVFKLRKLLQEKKIGHGGTLDPDVVGVLPIAVGKATRMIEYMTEAGKVYEGQVTLGYSTTTEDASGEVVARSSLPAVLTEELVDQTMTTFLGKITQTPPMYSAVKVNGRKLYEYARAGESVERPRREVTISLFERTSPLNFTEDGLCRFSFKVACSKGTYVRTLAVDLGRALGVESHMSFLQRSASAGLTLETAYTLGEIADMVSKQEMSFLLPIEYGVADLPKMVIDDTELTEISFGRRLSLPSQEPLLAAFHGEKVIAILEKRDQEYKPKKVLI</sequence>
<keyword id="KW-0413">Isomerase</keyword>
<keyword id="KW-0819">tRNA processing</keyword>
<protein>
    <recommendedName>
        <fullName evidence="1">tRNA pseudouridine synthase B</fullName>
        <ecNumber evidence="1">5.4.99.25</ecNumber>
    </recommendedName>
    <alternativeName>
        <fullName evidence="1">tRNA pseudouridine(55) synthase</fullName>
        <shortName evidence="1">Psi55 synthase</shortName>
    </alternativeName>
    <alternativeName>
        <fullName evidence="1">tRNA pseudouridylate synthase</fullName>
    </alternativeName>
    <alternativeName>
        <fullName evidence="1">tRNA-uridine isomerase</fullName>
    </alternativeName>
</protein>
<comment type="function">
    <text evidence="1">Responsible for synthesis of pseudouridine from uracil-55 in the psi GC loop of transfer RNAs.</text>
</comment>
<comment type="catalytic activity">
    <reaction evidence="1">
        <text>uridine(55) in tRNA = pseudouridine(55) in tRNA</text>
        <dbReference type="Rhea" id="RHEA:42532"/>
        <dbReference type="Rhea" id="RHEA-COMP:10101"/>
        <dbReference type="Rhea" id="RHEA-COMP:10102"/>
        <dbReference type="ChEBI" id="CHEBI:65314"/>
        <dbReference type="ChEBI" id="CHEBI:65315"/>
        <dbReference type="EC" id="5.4.99.25"/>
    </reaction>
</comment>
<comment type="similarity">
    <text evidence="1">Belongs to the pseudouridine synthase TruB family. Type 1 subfamily.</text>
</comment>
<accession>A2RE90</accession>
<evidence type="ECO:0000255" key="1">
    <source>
        <dbReference type="HAMAP-Rule" id="MF_01080"/>
    </source>
</evidence>